<accession>Q6HPW9</accession>
<organism>
    <name type="scientific">Bacillus thuringiensis subsp. konkukian (strain 97-27)</name>
    <dbReference type="NCBI Taxonomy" id="281309"/>
    <lineage>
        <taxon>Bacteria</taxon>
        <taxon>Bacillati</taxon>
        <taxon>Bacillota</taxon>
        <taxon>Bacilli</taxon>
        <taxon>Bacillales</taxon>
        <taxon>Bacillaceae</taxon>
        <taxon>Bacillus</taxon>
        <taxon>Bacillus cereus group</taxon>
    </lineage>
</organism>
<keyword id="KW-0131">Cell cycle</keyword>
<keyword id="KW-0132">Cell division</keyword>
<keyword id="KW-0717">Septation</keyword>
<keyword id="KW-0749">Sporulation</keyword>
<sequence>MEVTDVRLRRVNTEGRMRAIASITLDHEFVVHDIRVIDGNNGLFVAMPSKRTPDGEFRDIAHPINSGTRSKIQDAVLTEYHRLGELEEVEFEEAGAS</sequence>
<evidence type="ECO:0000255" key="1">
    <source>
        <dbReference type="HAMAP-Rule" id="MF_00819"/>
    </source>
</evidence>
<evidence type="ECO:0000305" key="2"/>
<name>SP5G_BACHK</name>
<feature type="chain" id="PRO_0000157189" description="Putative septation protein SpoVG">
    <location>
        <begin position="1"/>
        <end position="97"/>
    </location>
</feature>
<protein>
    <recommendedName>
        <fullName evidence="1">Putative septation protein SpoVG</fullName>
    </recommendedName>
    <alternativeName>
        <fullName evidence="1">Stage V sporulation protein G</fullName>
    </alternativeName>
</protein>
<dbReference type="EMBL" id="AE017355">
    <property type="protein sequence ID" value="AAT58900.1"/>
    <property type="status" value="ALT_INIT"/>
    <property type="molecule type" value="Genomic_DNA"/>
</dbReference>
<dbReference type="RefSeq" id="WP_000454041.1">
    <property type="nucleotide sequence ID" value="NC_005957.1"/>
</dbReference>
<dbReference type="RefSeq" id="YP_034401.2">
    <property type="nucleotide sequence ID" value="NC_005957.1"/>
</dbReference>
<dbReference type="SMR" id="Q6HPW9"/>
<dbReference type="GeneID" id="93011022"/>
<dbReference type="KEGG" id="btk:BT9727_0043"/>
<dbReference type="PATRIC" id="fig|281309.8.peg.45"/>
<dbReference type="HOGENOM" id="CLU_103669_2_1_9"/>
<dbReference type="Proteomes" id="UP000001301">
    <property type="component" value="Chromosome"/>
</dbReference>
<dbReference type="GO" id="GO:0030436">
    <property type="term" value="P:asexual sporulation"/>
    <property type="evidence" value="ECO:0007669"/>
    <property type="project" value="UniProtKB-UniRule"/>
</dbReference>
<dbReference type="GO" id="GO:0000917">
    <property type="term" value="P:division septum assembly"/>
    <property type="evidence" value="ECO:0007669"/>
    <property type="project" value="UniProtKB-KW"/>
</dbReference>
<dbReference type="GO" id="GO:0030435">
    <property type="term" value="P:sporulation resulting in formation of a cellular spore"/>
    <property type="evidence" value="ECO:0007669"/>
    <property type="project" value="UniProtKB-KW"/>
</dbReference>
<dbReference type="FunFam" id="3.30.1120.40:FF:000001">
    <property type="entry name" value="Putative septation protein SpoVG"/>
    <property type="match status" value="1"/>
</dbReference>
<dbReference type="Gene3D" id="3.30.1120.40">
    <property type="entry name" value="Stage V sporulation protein G"/>
    <property type="match status" value="1"/>
</dbReference>
<dbReference type="HAMAP" id="MF_00819">
    <property type="entry name" value="SpoVG"/>
    <property type="match status" value="1"/>
</dbReference>
<dbReference type="InterPro" id="IPR007170">
    <property type="entry name" value="SpoVG"/>
</dbReference>
<dbReference type="InterPro" id="IPR036751">
    <property type="entry name" value="SpoVG_sf"/>
</dbReference>
<dbReference type="NCBIfam" id="NF009749">
    <property type="entry name" value="PRK13259.1"/>
    <property type="match status" value="1"/>
</dbReference>
<dbReference type="PANTHER" id="PTHR38429">
    <property type="entry name" value="SEPTATION PROTEIN SPOVG-RELATED"/>
    <property type="match status" value="1"/>
</dbReference>
<dbReference type="PANTHER" id="PTHR38429:SF1">
    <property type="entry name" value="SEPTATION PROTEIN SPOVG-RELATED"/>
    <property type="match status" value="1"/>
</dbReference>
<dbReference type="Pfam" id="PF04026">
    <property type="entry name" value="SpoVG"/>
    <property type="match status" value="1"/>
</dbReference>
<dbReference type="SUPFAM" id="SSF160537">
    <property type="entry name" value="SpoVG-like"/>
    <property type="match status" value="1"/>
</dbReference>
<proteinExistence type="inferred from homology"/>
<gene>
    <name evidence="1" type="primary">spoVG</name>
    <name type="ordered locus">BT9727_0043</name>
</gene>
<comment type="function">
    <text evidence="1">Essential for sporulation. Interferes with or is a negative regulator of the pathway leading to asymmetric septation.</text>
</comment>
<comment type="similarity">
    <text evidence="1">Belongs to the SpoVG family.</text>
</comment>
<comment type="sequence caution" evidence="2">
    <conflict type="erroneous initiation">
        <sequence resource="EMBL-CDS" id="AAT58900"/>
    </conflict>
</comment>
<reference key="1">
    <citation type="journal article" date="2006" name="J. Bacteriol.">
        <title>Pathogenomic sequence analysis of Bacillus cereus and Bacillus thuringiensis isolates closely related to Bacillus anthracis.</title>
        <authorList>
            <person name="Han C.S."/>
            <person name="Xie G."/>
            <person name="Challacombe J.F."/>
            <person name="Altherr M.R."/>
            <person name="Bhotika S.S."/>
            <person name="Bruce D."/>
            <person name="Campbell C.S."/>
            <person name="Campbell M.L."/>
            <person name="Chen J."/>
            <person name="Chertkov O."/>
            <person name="Cleland C."/>
            <person name="Dimitrijevic M."/>
            <person name="Doggett N.A."/>
            <person name="Fawcett J.J."/>
            <person name="Glavina T."/>
            <person name="Goodwin L.A."/>
            <person name="Hill K.K."/>
            <person name="Hitchcock P."/>
            <person name="Jackson P.J."/>
            <person name="Keim P."/>
            <person name="Kewalramani A.R."/>
            <person name="Longmire J."/>
            <person name="Lucas S."/>
            <person name="Malfatti S."/>
            <person name="McMurry K."/>
            <person name="Meincke L.J."/>
            <person name="Misra M."/>
            <person name="Moseman B.L."/>
            <person name="Mundt M."/>
            <person name="Munk A.C."/>
            <person name="Okinaka R.T."/>
            <person name="Parson-Quintana B."/>
            <person name="Reilly L.P."/>
            <person name="Richardson P."/>
            <person name="Robinson D.L."/>
            <person name="Rubin E."/>
            <person name="Saunders E."/>
            <person name="Tapia R."/>
            <person name="Tesmer J.G."/>
            <person name="Thayer N."/>
            <person name="Thompson L.S."/>
            <person name="Tice H."/>
            <person name="Ticknor L.O."/>
            <person name="Wills P.L."/>
            <person name="Brettin T.S."/>
            <person name="Gilna P."/>
        </authorList>
    </citation>
    <scope>NUCLEOTIDE SEQUENCE [LARGE SCALE GENOMIC DNA]</scope>
    <source>
        <strain>97-27</strain>
    </source>
</reference>